<accession>Q9CQ06</accession>
<accession>Q9CX51</accession>
<accession>Q9D1L7</accession>
<accession>Q9D7R6</accession>
<evidence type="ECO:0000250" key="1"/>
<evidence type="ECO:0000250" key="2">
    <source>
        <dbReference type="UniProtKB" id="Q96A35"/>
    </source>
</evidence>
<evidence type="ECO:0000305" key="3"/>
<dbReference type="EMBL" id="AK003362">
    <property type="protein sequence ID" value="BAB22737.1"/>
    <property type="molecule type" value="mRNA"/>
</dbReference>
<dbReference type="EMBL" id="AK008117">
    <property type="protein sequence ID" value="BAB25472.1"/>
    <property type="molecule type" value="mRNA"/>
</dbReference>
<dbReference type="EMBL" id="AK008961">
    <property type="protein sequence ID" value="BAB25991.1"/>
    <property type="molecule type" value="mRNA"/>
</dbReference>
<dbReference type="EMBL" id="AK013394">
    <property type="protein sequence ID" value="BAB28828.1"/>
    <property type="molecule type" value="mRNA"/>
</dbReference>
<dbReference type="EMBL" id="AK019976">
    <property type="protein sequence ID" value="BAB31945.1"/>
    <property type="molecule type" value="mRNA"/>
</dbReference>
<dbReference type="EMBL" id="AK020157">
    <property type="protein sequence ID" value="BAB32014.1"/>
    <property type="molecule type" value="mRNA"/>
</dbReference>
<dbReference type="EMBL" id="AK167623">
    <property type="protein sequence ID" value="BAE39675.1"/>
    <property type="molecule type" value="mRNA"/>
</dbReference>
<dbReference type="EMBL" id="BC004736">
    <property type="protein sequence ID" value="AAH04736.1"/>
    <property type="molecule type" value="mRNA"/>
</dbReference>
<dbReference type="EMBL" id="BC025506">
    <property type="protein sequence ID" value="AAH25506.1"/>
    <property type="molecule type" value="mRNA"/>
</dbReference>
<dbReference type="EMBL" id="BC031730">
    <property type="protein sequence ID" value="AAH31730.1"/>
    <property type="molecule type" value="mRNA"/>
</dbReference>
<dbReference type="CCDS" id="CCDS38477.1"/>
<dbReference type="RefSeq" id="NP_080867.2">
    <property type="nucleotide sequence ID" value="NM_026591.3"/>
</dbReference>
<dbReference type="RefSeq" id="XP_006502003.1">
    <property type="nucleotide sequence ID" value="XM_006501940.2"/>
</dbReference>
<dbReference type="RefSeq" id="XP_006502004.1">
    <property type="nucleotide sequence ID" value="XM_006501941.3"/>
</dbReference>
<dbReference type="RefSeq" id="XP_006502005.1">
    <property type="nucleotide sequence ID" value="XM_006501942.3"/>
</dbReference>
<dbReference type="SMR" id="Q9CQ06"/>
<dbReference type="BioGRID" id="212382">
    <property type="interactions" value="1"/>
</dbReference>
<dbReference type="ComplexPortal" id="CPX-5302">
    <property type="entry name" value="39S mitochondrial large ribosomal subunit"/>
</dbReference>
<dbReference type="FunCoup" id="Q9CQ06">
    <property type="interactions" value="1412"/>
</dbReference>
<dbReference type="STRING" id="10090.ENSMUSP00000114111"/>
<dbReference type="GlyGen" id="Q9CQ06">
    <property type="glycosylation" value="1 site, 1 O-linked glycan (1 site)"/>
</dbReference>
<dbReference type="iPTMnet" id="Q9CQ06"/>
<dbReference type="PhosphoSitePlus" id="Q9CQ06"/>
<dbReference type="PaxDb" id="10090-ENSMUSP00000113959"/>
<dbReference type="PeptideAtlas" id="Q9CQ06"/>
<dbReference type="ProteomicsDB" id="299909"/>
<dbReference type="Pumba" id="Q9CQ06"/>
<dbReference type="Antibodypedia" id="34225">
    <property type="antibodies" value="194 antibodies from 27 providers"/>
</dbReference>
<dbReference type="DNASU" id="67707"/>
<dbReference type="Ensembl" id="ENSMUST00000019854.13">
    <property type="protein sequence ID" value="ENSMUSP00000019854.7"/>
    <property type="gene ID" value="ENSMUSG00000019710.14"/>
</dbReference>
<dbReference type="Ensembl" id="ENSMUST00000119968.8">
    <property type="protein sequence ID" value="ENSMUSP00000114111.2"/>
    <property type="gene ID" value="ENSMUSG00000019710.14"/>
</dbReference>
<dbReference type="Ensembl" id="ENSMUST00000121048.2">
    <property type="protein sequence ID" value="ENSMUSP00000113959.2"/>
    <property type="gene ID" value="ENSMUSG00000019710.14"/>
</dbReference>
<dbReference type="Ensembl" id="ENSMUST00000121920.8">
    <property type="protein sequence ID" value="ENSMUSP00000112885.2"/>
    <property type="gene ID" value="ENSMUSG00000019710.14"/>
</dbReference>
<dbReference type="GeneID" id="67707"/>
<dbReference type="KEGG" id="mmu:67707"/>
<dbReference type="UCSC" id="uc008ptd.1">
    <property type="organism name" value="mouse"/>
</dbReference>
<dbReference type="AGR" id="MGI:1914957"/>
<dbReference type="CTD" id="79590"/>
<dbReference type="MGI" id="MGI:1914957">
    <property type="gene designation" value="Mrpl24"/>
</dbReference>
<dbReference type="VEuPathDB" id="HostDB:ENSMUSG00000019710"/>
<dbReference type="eggNOG" id="KOG1708">
    <property type="taxonomic scope" value="Eukaryota"/>
</dbReference>
<dbReference type="GeneTree" id="ENSGT00390000014542"/>
<dbReference type="HOGENOM" id="CLU_093315_0_1_1"/>
<dbReference type="InParanoid" id="Q9CQ06"/>
<dbReference type="OMA" id="DFEWRFT"/>
<dbReference type="OrthoDB" id="359154at2759"/>
<dbReference type="PhylomeDB" id="Q9CQ06"/>
<dbReference type="TreeFam" id="TF105984"/>
<dbReference type="Reactome" id="R-MMU-5389840">
    <property type="pathway name" value="Mitochondrial translation elongation"/>
</dbReference>
<dbReference type="Reactome" id="R-MMU-5419276">
    <property type="pathway name" value="Mitochondrial translation termination"/>
</dbReference>
<dbReference type="BioGRID-ORCS" id="67707">
    <property type="hits" value="19 hits in 80 CRISPR screens"/>
</dbReference>
<dbReference type="ChiTaRS" id="Mrpl24">
    <property type="organism name" value="mouse"/>
</dbReference>
<dbReference type="PRO" id="PR:Q9CQ06"/>
<dbReference type="Proteomes" id="UP000000589">
    <property type="component" value="Chromosome 3"/>
</dbReference>
<dbReference type="RNAct" id="Q9CQ06">
    <property type="molecule type" value="protein"/>
</dbReference>
<dbReference type="Bgee" id="ENSMUSG00000019710">
    <property type="expression patterns" value="Expressed in endocardial cushion and 282 other cell types or tissues"/>
</dbReference>
<dbReference type="ExpressionAtlas" id="Q9CQ06">
    <property type="expression patterns" value="baseline and differential"/>
</dbReference>
<dbReference type="GO" id="GO:0005743">
    <property type="term" value="C:mitochondrial inner membrane"/>
    <property type="evidence" value="ECO:0000303"/>
    <property type="project" value="ComplexPortal"/>
</dbReference>
<dbReference type="GO" id="GO:0005762">
    <property type="term" value="C:mitochondrial large ribosomal subunit"/>
    <property type="evidence" value="ECO:0000250"/>
    <property type="project" value="UniProtKB"/>
</dbReference>
<dbReference type="GO" id="GO:0005739">
    <property type="term" value="C:mitochondrion"/>
    <property type="evidence" value="ECO:0007005"/>
    <property type="project" value="MGI"/>
</dbReference>
<dbReference type="GO" id="GO:0003723">
    <property type="term" value="F:RNA binding"/>
    <property type="evidence" value="ECO:0007669"/>
    <property type="project" value="InterPro"/>
</dbReference>
<dbReference type="GO" id="GO:0003735">
    <property type="term" value="F:structural constituent of ribosome"/>
    <property type="evidence" value="ECO:0007669"/>
    <property type="project" value="InterPro"/>
</dbReference>
<dbReference type="GO" id="GO:0032543">
    <property type="term" value="P:mitochondrial translation"/>
    <property type="evidence" value="ECO:0000303"/>
    <property type="project" value="ComplexPortal"/>
</dbReference>
<dbReference type="CDD" id="cd06089">
    <property type="entry name" value="KOW_RPL26"/>
    <property type="match status" value="1"/>
</dbReference>
<dbReference type="FunFam" id="2.30.30.30:FF:000032">
    <property type="entry name" value="39S ribosomal protein L24, mitochondrial"/>
    <property type="match status" value="1"/>
</dbReference>
<dbReference type="Gene3D" id="2.30.30.30">
    <property type="match status" value="1"/>
</dbReference>
<dbReference type="HAMAP" id="MF_01326_B">
    <property type="entry name" value="Ribosomal_uL24_B"/>
    <property type="match status" value="1"/>
</dbReference>
<dbReference type="InterPro" id="IPR005824">
    <property type="entry name" value="KOW"/>
</dbReference>
<dbReference type="InterPro" id="IPR014722">
    <property type="entry name" value="Rib_uL2_dom2"/>
</dbReference>
<dbReference type="InterPro" id="IPR003256">
    <property type="entry name" value="Ribosomal_uL24"/>
</dbReference>
<dbReference type="InterPro" id="IPR005825">
    <property type="entry name" value="Ribosomal_uL24_CS"/>
</dbReference>
<dbReference type="InterPro" id="IPR041988">
    <property type="entry name" value="Ribosomal_uL24_KOW"/>
</dbReference>
<dbReference type="InterPro" id="IPR008991">
    <property type="entry name" value="Translation_prot_SH3-like_sf"/>
</dbReference>
<dbReference type="NCBIfam" id="TIGR01079">
    <property type="entry name" value="rplX_bact"/>
    <property type="match status" value="1"/>
</dbReference>
<dbReference type="PANTHER" id="PTHR12903">
    <property type="entry name" value="MITOCHONDRIAL RIBOSOMAL PROTEIN L24"/>
    <property type="match status" value="1"/>
</dbReference>
<dbReference type="Pfam" id="PF00467">
    <property type="entry name" value="KOW"/>
    <property type="match status" value="1"/>
</dbReference>
<dbReference type="Pfam" id="PF17136">
    <property type="entry name" value="ribosomal_L24"/>
    <property type="match status" value="1"/>
</dbReference>
<dbReference type="SMART" id="SM00739">
    <property type="entry name" value="KOW"/>
    <property type="match status" value="1"/>
</dbReference>
<dbReference type="SUPFAM" id="SSF50104">
    <property type="entry name" value="Translation proteins SH3-like domain"/>
    <property type="match status" value="1"/>
</dbReference>
<dbReference type="PROSITE" id="PS01108">
    <property type="entry name" value="RIBOSOMAL_L24"/>
    <property type="match status" value="1"/>
</dbReference>
<proteinExistence type="evidence at protein level"/>
<feature type="transit peptide" description="Mitochondrion" evidence="1">
    <location>
        <begin position="1"/>
        <end position="9"/>
    </location>
</feature>
<feature type="chain" id="PRO_0000270489" description="Large ribosomal subunit protein uL24m">
    <location>
        <begin position="10"/>
        <end position="216"/>
    </location>
</feature>
<feature type="domain" description="KOW">
    <location>
        <begin position="56"/>
        <end position="89"/>
    </location>
</feature>
<feature type="modified residue" description="Phosphoserine" evidence="2">
    <location>
        <position position="24"/>
    </location>
</feature>
<feature type="sequence conflict" description="In Ref. 1; BAB25991." evidence="3" ref="1">
    <original>LAL</original>
    <variation>FAS</variation>
    <location>
        <begin position="7"/>
        <end position="9"/>
    </location>
</feature>
<feature type="sequence conflict" description="In Ref. 1; BAB25991." evidence="3" ref="1">
    <original>TS</original>
    <variation>IC</variation>
    <location>
        <begin position="14"/>
        <end position="15"/>
    </location>
</feature>
<feature type="sequence conflict" description="In Ref. 1; BAB25991." evidence="3" ref="1">
    <original>PG</original>
    <variation>RS</variation>
    <location>
        <begin position="26"/>
        <end position="27"/>
    </location>
</feature>
<feature type="sequence conflict" description="In Ref. 1; BAB25991." evidence="3" ref="1">
    <original>A</original>
    <variation>G</variation>
    <location>
        <position position="30"/>
    </location>
</feature>
<feature type="sequence conflict" description="In Ref. 1; BAB25991." evidence="3" ref="1">
    <original>K</original>
    <variation>Q</variation>
    <location>
        <position position="34"/>
    </location>
</feature>
<feature type="sequence conflict" description="In Ref. 1; BAB22737." evidence="3" ref="1">
    <original>R</original>
    <variation>L</variation>
    <location>
        <position position="42"/>
    </location>
</feature>
<feature type="sequence conflict" description="In Ref. 1; BAB25991." evidence="3" ref="1">
    <original>P</original>
    <variation>A</variation>
    <location>
        <position position="48"/>
    </location>
</feature>
<feature type="sequence conflict" description="In Ref. 1; BAB32014." evidence="3" ref="1">
    <original>L</original>
    <variation>F</variation>
    <location>
        <position position="116"/>
    </location>
</feature>
<feature type="sequence conflict" description="In Ref. 1; BAB22737." evidence="3" ref="1">
    <original>R</original>
    <variation>L</variation>
    <location>
        <position position="143"/>
    </location>
</feature>
<feature type="sequence conflict" description="In Ref. 1; BAB32014." evidence="3" ref="1">
    <original>T</original>
    <variation>I</variation>
    <location>
        <position position="177"/>
    </location>
</feature>
<sequence length="216" mass="24945">MRLSALLALASKATSSPFYRYGMSRPGSIADKRKNPPWSRRRPVVVEPISDEDWHLFCGDMVEILEGKDAGKQGKVVQVVRQRNWVVLEGLNTHYRYIGRTKDHRGTMIASEAPLLHHQVKLVDPVDRKPTEIQWRFTEAGERVRVSTRSGRIIPKPEFPRADGIVPETWTDGPKDTSVEDALERTYVPRLKTLEEDVMEAMGIQETRRFKKVYWY</sequence>
<protein>
    <recommendedName>
        <fullName evidence="3">Large ribosomal subunit protein uL24m</fullName>
    </recommendedName>
    <alternativeName>
        <fullName>39S ribosomal protein L24, mitochondrial</fullName>
        <shortName>L24mt</shortName>
        <shortName>MRP-L24</shortName>
    </alternativeName>
</protein>
<organism>
    <name type="scientific">Mus musculus</name>
    <name type="common">Mouse</name>
    <dbReference type="NCBI Taxonomy" id="10090"/>
    <lineage>
        <taxon>Eukaryota</taxon>
        <taxon>Metazoa</taxon>
        <taxon>Chordata</taxon>
        <taxon>Craniata</taxon>
        <taxon>Vertebrata</taxon>
        <taxon>Euteleostomi</taxon>
        <taxon>Mammalia</taxon>
        <taxon>Eutheria</taxon>
        <taxon>Euarchontoglires</taxon>
        <taxon>Glires</taxon>
        <taxon>Rodentia</taxon>
        <taxon>Myomorpha</taxon>
        <taxon>Muroidea</taxon>
        <taxon>Muridae</taxon>
        <taxon>Murinae</taxon>
        <taxon>Mus</taxon>
        <taxon>Mus</taxon>
    </lineage>
</organism>
<name>RM24_MOUSE</name>
<keyword id="KW-0496">Mitochondrion</keyword>
<keyword id="KW-0597">Phosphoprotein</keyword>
<keyword id="KW-1185">Reference proteome</keyword>
<keyword id="KW-0687">Ribonucleoprotein</keyword>
<keyword id="KW-0689">Ribosomal protein</keyword>
<keyword id="KW-0809">Transit peptide</keyword>
<comment type="subunit">
    <text evidence="2">Component of the mitochondrial ribosome large subunit (39S) which comprises a 16S rRNA and about 50 distinct proteins.</text>
</comment>
<comment type="subcellular location">
    <subcellularLocation>
        <location evidence="2">Mitochondrion</location>
    </subcellularLocation>
</comment>
<comment type="similarity">
    <text evidence="3">Belongs to the universal ribosomal protein uL24 family.</text>
</comment>
<gene>
    <name type="primary">Mrpl24</name>
</gene>
<reference key="1">
    <citation type="journal article" date="2005" name="Science">
        <title>The transcriptional landscape of the mammalian genome.</title>
        <authorList>
            <person name="Carninci P."/>
            <person name="Kasukawa T."/>
            <person name="Katayama S."/>
            <person name="Gough J."/>
            <person name="Frith M.C."/>
            <person name="Maeda N."/>
            <person name="Oyama R."/>
            <person name="Ravasi T."/>
            <person name="Lenhard B."/>
            <person name="Wells C."/>
            <person name="Kodzius R."/>
            <person name="Shimokawa K."/>
            <person name="Bajic V.B."/>
            <person name="Brenner S.E."/>
            <person name="Batalov S."/>
            <person name="Forrest A.R."/>
            <person name="Zavolan M."/>
            <person name="Davis M.J."/>
            <person name="Wilming L.G."/>
            <person name="Aidinis V."/>
            <person name="Allen J.E."/>
            <person name="Ambesi-Impiombato A."/>
            <person name="Apweiler R."/>
            <person name="Aturaliya R.N."/>
            <person name="Bailey T.L."/>
            <person name="Bansal M."/>
            <person name="Baxter L."/>
            <person name="Beisel K.W."/>
            <person name="Bersano T."/>
            <person name="Bono H."/>
            <person name="Chalk A.M."/>
            <person name="Chiu K.P."/>
            <person name="Choudhary V."/>
            <person name="Christoffels A."/>
            <person name="Clutterbuck D.R."/>
            <person name="Crowe M.L."/>
            <person name="Dalla E."/>
            <person name="Dalrymple B.P."/>
            <person name="de Bono B."/>
            <person name="Della Gatta G."/>
            <person name="di Bernardo D."/>
            <person name="Down T."/>
            <person name="Engstrom P."/>
            <person name="Fagiolini M."/>
            <person name="Faulkner G."/>
            <person name="Fletcher C.F."/>
            <person name="Fukushima T."/>
            <person name="Furuno M."/>
            <person name="Futaki S."/>
            <person name="Gariboldi M."/>
            <person name="Georgii-Hemming P."/>
            <person name="Gingeras T.R."/>
            <person name="Gojobori T."/>
            <person name="Green R.E."/>
            <person name="Gustincich S."/>
            <person name="Harbers M."/>
            <person name="Hayashi Y."/>
            <person name="Hensch T.K."/>
            <person name="Hirokawa N."/>
            <person name="Hill D."/>
            <person name="Huminiecki L."/>
            <person name="Iacono M."/>
            <person name="Ikeo K."/>
            <person name="Iwama A."/>
            <person name="Ishikawa T."/>
            <person name="Jakt M."/>
            <person name="Kanapin A."/>
            <person name="Katoh M."/>
            <person name="Kawasawa Y."/>
            <person name="Kelso J."/>
            <person name="Kitamura H."/>
            <person name="Kitano H."/>
            <person name="Kollias G."/>
            <person name="Krishnan S.P."/>
            <person name="Kruger A."/>
            <person name="Kummerfeld S.K."/>
            <person name="Kurochkin I.V."/>
            <person name="Lareau L.F."/>
            <person name="Lazarevic D."/>
            <person name="Lipovich L."/>
            <person name="Liu J."/>
            <person name="Liuni S."/>
            <person name="McWilliam S."/>
            <person name="Madan Babu M."/>
            <person name="Madera M."/>
            <person name="Marchionni L."/>
            <person name="Matsuda H."/>
            <person name="Matsuzawa S."/>
            <person name="Miki H."/>
            <person name="Mignone F."/>
            <person name="Miyake S."/>
            <person name="Morris K."/>
            <person name="Mottagui-Tabar S."/>
            <person name="Mulder N."/>
            <person name="Nakano N."/>
            <person name="Nakauchi H."/>
            <person name="Ng P."/>
            <person name="Nilsson R."/>
            <person name="Nishiguchi S."/>
            <person name="Nishikawa S."/>
            <person name="Nori F."/>
            <person name="Ohara O."/>
            <person name="Okazaki Y."/>
            <person name="Orlando V."/>
            <person name="Pang K.C."/>
            <person name="Pavan W.J."/>
            <person name="Pavesi G."/>
            <person name="Pesole G."/>
            <person name="Petrovsky N."/>
            <person name="Piazza S."/>
            <person name="Reed J."/>
            <person name="Reid J.F."/>
            <person name="Ring B.Z."/>
            <person name="Ringwald M."/>
            <person name="Rost B."/>
            <person name="Ruan Y."/>
            <person name="Salzberg S.L."/>
            <person name="Sandelin A."/>
            <person name="Schneider C."/>
            <person name="Schoenbach C."/>
            <person name="Sekiguchi K."/>
            <person name="Semple C.A."/>
            <person name="Seno S."/>
            <person name="Sessa L."/>
            <person name="Sheng Y."/>
            <person name="Shibata Y."/>
            <person name="Shimada H."/>
            <person name="Shimada K."/>
            <person name="Silva D."/>
            <person name="Sinclair B."/>
            <person name="Sperling S."/>
            <person name="Stupka E."/>
            <person name="Sugiura K."/>
            <person name="Sultana R."/>
            <person name="Takenaka Y."/>
            <person name="Taki K."/>
            <person name="Tammoja K."/>
            <person name="Tan S.L."/>
            <person name="Tang S."/>
            <person name="Taylor M.S."/>
            <person name="Tegner J."/>
            <person name="Teichmann S.A."/>
            <person name="Ueda H.R."/>
            <person name="van Nimwegen E."/>
            <person name="Verardo R."/>
            <person name="Wei C.L."/>
            <person name="Yagi K."/>
            <person name="Yamanishi H."/>
            <person name="Zabarovsky E."/>
            <person name="Zhu S."/>
            <person name="Zimmer A."/>
            <person name="Hide W."/>
            <person name="Bult C."/>
            <person name="Grimmond S.M."/>
            <person name="Teasdale R.D."/>
            <person name="Liu E.T."/>
            <person name="Brusic V."/>
            <person name="Quackenbush J."/>
            <person name="Wahlestedt C."/>
            <person name="Mattick J.S."/>
            <person name="Hume D.A."/>
            <person name="Kai C."/>
            <person name="Sasaki D."/>
            <person name="Tomaru Y."/>
            <person name="Fukuda S."/>
            <person name="Kanamori-Katayama M."/>
            <person name="Suzuki M."/>
            <person name="Aoki J."/>
            <person name="Arakawa T."/>
            <person name="Iida J."/>
            <person name="Imamura K."/>
            <person name="Itoh M."/>
            <person name="Kato T."/>
            <person name="Kawaji H."/>
            <person name="Kawagashira N."/>
            <person name="Kawashima T."/>
            <person name="Kojima M."/>
            <person name="Kondo S."/>
            <person name="Konno H."/>
            <person name="Nakano K."/>
            <person name="Ninomiya N."/>
            <person name="Nishio T."/>
            <person name="Okada M."/>
            <person name="Plessy C."/>
            <person name="Shibata K."/>
            <person name="Shiraki T."/>
            <person name="Suzuki S."/>
            <person name="Tagami M."/>
            <person name="Waki K."/>
            <person name="Watahiki A."/>
            <person name="Okamura-Oho Y."/>
            <person name="Suzuki H."/>
            <person name="Kawai J."/>
            <person name="Hayashizaki Y."/>
        </authorList>
    </citation>
    <scope>NUCLEOTIDE SEQUENCE [LARGE SCALE MRNA]</scope>
    <source>
        <strain>C57BL/6J</strain>
        <tissue>Placenta</tissue>
        <tissue>Small intestine</tissue>
        <tissue>Stomach</tissue>
        <tissue>Wolffian duct</tissue>
    </source>
</reference>
<reference key="2">
    <citation type="journal article" date="2004" name="Genome Res.">
        <title>The status, quality, and expansion of the NIH full-length cDNA project: the Mammalian Gene Collection (MGC).</title>
        <authorList>
            <consortium name="The MGC Project Team"/>
        </authorList>
    </citation>
    <scope>NUCLEOTIDE SEQUENCE [LARGE SCALE MRNA]</scope>
    <source>
        <strain>Czech II</strain>
        <strain>FVB/N</strain>
        <tissue>Mammary gland</tissue>
    </source>
</reference>
<reference key="3">
    <citation type="journal article" date="2010" name="Cell">
        <title>A tissue-specific atlas of mouse protein phosphorylation and expression.</title>
        <authorList>
            <person name="Huttlin E.L."/>
            <person name="Jedrychowski M.P."/>
            <person name="Elias J.E."/>
            <person name="Goswami T."/>
            <person name="Rad R."/>
            <person name="Beausoleil S.A."/>
            <person name="Villen J."/>
            <person name="Haas W."/>
            <person name="Sowa M.E."/>
            <person name="Gygi S.P."/>
        </authorList>
    </citation>
    <scope>IDENTIFICATION BY MASS SPECTROMETRY [LARGE SCALE ANALYSIS]</scope>
    <source>
        <tissue>Heart</tissue>
        <tissue>Kidney</tissue>
        <tissue>Liver</tissue>
        <tissue>Spleen</tissue>
    </source>
</reference>